<name>RIMM_AZOC5</name>
<accession>A8IKV0</accession>
<dbReference type="EMBL" id="AP009384">
    <property type="protein sequence ID" value="BAF89951.1"/>
    <property type="molecule type" value="Genomic_DNA"/>
</dbReference>
<dbReference type="RefSeq" id="WP_012172473.1">
    <property type="nucleotide sequence ID" value="NC_009937.1"/>
</dbReference>
<dbReference type="SMR" id="A8IKV0"/>
<dbReference type="STRING" id="438753.AZC_3953"/>
<dbReference type="KEGG" id="azc:AZC_3953"/>
<dbReference type="eggNOG" id="COG0806">
    <property type="taxonomic scope" value="Bacteria"/>
</dbReference>
<dbReference type="HOGENOM" id="CLU_077636_0_1_5"/>
<dbReference type="Proteomes" id="UP000000270">
    <property type="component" value="Chromosome"/>
</dbReference>
<dbReference type="GO" id="GO:0005737">
    <property type="term" value="C:cytoplasm"/>
    <property type="evidence" value="ECO:0007669"/>
    <property type="project" value="UniProtKB-SubCell"/>
</dbReference>
<dbReference type="GO" id="GO:0005840">
    <property type="term" value="C:ribosome"/>
    <property type="evidence" value="ECO:0007669"/>
    <property type="project" value="InterPro"/>
</dbReference>
<dbReference type="GO" id="GO:0043022">
    <property type="term" value="F:ribosome binding"/>
    <property type="evidence" value="ECO:0007669"/>
    <property type="project" value="InterPro"/>
</dbReference>
<dbReference type="GO" id="GO:0042274">
    <property type="term" value="P:ribosomal small subunit biogenesis"/>
    <property type="evidence" value="ECO:0007669"/>
    <property type="project" value="UniProtKB-UniRule"/>
</dbReference>
<dbReference type="GO" id="GO:0006364">
    <property type="term" value="P:rRNA processing"/>
    <property type="evidence" value="ECO:0007669"/>
    <property type="project" value="UniProtKB-UniRule"/>
</dbReference>
<dbReference type="Gene3D" id="2.30.30.240">
    <property type="entry name" value="PRC-barrel domain"/>
    <property type="match status" value="1"/>
</dbReference>
<dbReference type="Gene3D" id="2.40.30.60">
    <property type="entry name" value="RimM"/>
    <property type="match status" value="1"/>
</dbReference>
<dbReference type="HAMAP" id="MF_00014">
    <property type="entry name" value="Ribosome_mat_RimM"/>
    <property type="match status" value="1"/>
</dbReference>
<dbReference type="InterPro" id="IPR011033">
    <property type="entry name" value="PRC_barrel-like_sf"/>
</dbReference>
<dbReference type="InterPro" id="IPR056792">
    <property type="entry name" value="PRC_RimM"/>
</dbReference>
<dbReference type="InterPro" id="IPR011961">
    <property type="entry name" value="RimM"/>
</dbReference>
<dbReference type="InterPro" id="IPR002676">
    <property type="entry name" value="RimM_N"/>
</dbReference>
<dbReference type="InterPro" id="IPR036976">
    <property type="entry name" value="RimM_N_sf"/>
</dbReference>
<dbReference type="InterPro" id="IPR009000">
    <property type="entry name" value="Transl_B-barrel_sf"/>
</dbReference>
<dbReference type="NCBIfam" id="TIGR02273">
    <property type="entry name" value="16S_RimM"/>
    <property type="match status" value="1"/>
</dbReference>
<dbReference type="PANTHER" id="PTHR33692">
    <property type="entry name" value="RIBOSOME MATURATION FACTOR RIMM"/>
    <property type="match status" value="1"/>
</dbReference>
<dbReference type="PANTHER" id="PTHR33692:SF1">
    <property type="entry name" value="RIBOSOME MATURATION FACTOR RIMM"/>
    <property type="match status" value="1"/>
</dbReference>
<dbReference type="Pfam" id="PF24986">
    <property type="entry name" value="PRC_RimM"/>
    <property type="match status" value="1"/>
</dbReference>
<dbReference type="Pfam" id="PF01782">
    <property type="entry name" value="RimM"/>
    <property type="match status" value="1"/>
</dbReference>
<dbReference type="SUPFAM" id="SSF50346">
    <property type="entry name" value="PRC-barrel domain"/>
    <property type="match status" value="1"/>
</dbReference>
<dbReference type="SUPFAM" id="SSF50447">
    <property type="entry name" value="Translation proteins"/>
    <property type="match status" value="1"/>
</dbReference>
<feature type="chain" id="PRO_1000070957" description="Ribosome maturation factor RimM">
    <location>
        <begin position="1"/>
        <end position="177"/>
    </location>
</feature>
<feature type="domain" description="PRC barrel" evidence="1">
    <location>
        <begin position="92"/>
        <end position="166"/>
    </location>
</feature>
<organism>
    <name type="scientific">Azorhizobium caulinodans (strain ATCC 43989 / DSM 5975 / JCM 20966 / LMG 6465 / NBRC 14845 / NCIMB 13405 / ORS 571)</name>
    <dbReference type="NCBI Taxonomy" id="438753"/>
    <lineage>
        <taxon>Bacteria</taxon>
        <taxon>Pseudomonadati</taxon>
        <taxon>Pseudomonadota</taxon>
        <taxon>Alphaproteobacteria</taxon>
        <taxon>Hyphomicrobiales</taxon>
        <taxon>Xanthobacteraceae</taxon>
        <taxon>Azorhizobium</taxon>
    </lineage>
</organism>
<proteinExistence type="inferred from homology"/>
<protein>
    <recommendedName>
        <fullName evidence="1">Ribosome maturation factor RimM</fullName>
    </recommendedName>
</protein>
<keyword id="KW-0143">Chaperone</keyword>
<keyword id="KW-0963">Cytoplasm</keyword>
<keyword id="KW-1185">Reference proteome</keyword>
<keyword id="KW-0690">Ribosome biogenesis</keyword>
<keyword id="KW-0698">rRNA processing</keyword>
<sequence>MTDRILIARIGAPHGVKGEVRLFAFGEDPLALKRYPLTDESGARRFKVQSLRAAKDHFVARLEGIADRNAAEALTNTDLFVPRDALPAAEDEDTFYHADLMGLRVEDQSGALLGTVLAMHDFGAGDVLEYTPEGGGRTLLLPFTKAAVPVVDVPGGRIVVVPDTNPDETPPEDADQA</sequence>
<comment type="function">
    <text evidence="1">An accessory protein needed during the final step in the assembly of 30S ribosomal subunit, possibly for assembly of the head region. Essential for efficient processing of 16S rRNA. May be needed both before and after RbfA during the maturation of 16S rRNA. It has affinity for free ribosomal 30S subunits but not for 70S ribosomes.</text>
</comment>
<comment type="subunit">
    <text evidence="1">Binds ribosomal protein uS19.</text>
</comment>
<comment type="subcellular location">
    <subcellularLocation>
        <location evidence="1">Cytoplasm</location>
    </subcellularLocation>
</comment>
<comment type="domain">
    <text evidence="1">The PRC barrel domain binds ribosomal protein uS19.</text>
</comment>
<comment type="similarity">
    <text evidence="1">Belongs to the RimM family.</text>
</comment>
<evidence type="ECO:0000255" key="1">
    <source>
        <dbReference type="HAMAP-Rule" id="MF_00014"/>
    </source>
</evidence>
<reference key="1">
    <citation type="submission" date="2007-04" db="EMBL/GenBank/DDBJ databases">
        <title>Complete genome sequence of the nitrogen-fixing bacterium Azorhizobium caulinodans ORS571.</title>
        <authorList>
            <person name="Lee K.B."/>
            <person name="Backer P.D."/>
            <person name="Aono T."/>
            <person name="Liu C.T."/>
            <person name="Suzuki S."/>
            <person name="Suzuki T."/>
            <person name="Kaneko T."/>
            <person name="Yamada M."/>
            <person name="Tabata S."/>
            <person name="Kupfer D.M."/>
            <person name="Najar F.Z."/>
            <person name="Wiley G.B."/>
            <person name="Roe B."/>
            <person name="Binnewies T."/>
            <person name="Ussery D."/>
            <person name="Vereecke D."/>
            <person name="Gevers D."/>
            <person name="Holsters M."/>
            <person name="Oyaizu H."/>
        </authorList>
    </citation>
    <scope>NUCLEOTIDE SEQUENCE [LARGE SCALE GENOMIC DNA]</scope>
    <source>
        <strain>ATCC 43989 / DSM 5975 / JCM 20966 / LMG 6465 / NBRC 14845 / NCIMB 13405 / ORS 571</strain>
    </source>
</reference>
<gene>
    <name evidence="1" type="primary">rimM</name>
    <name type="ordered locus">AZC_3953</name>
</gene>